<accession>Q13576</accession>
<accession>A8K4V1</accession>
<accession>B7Z8A4</accession>
<accession>J3KR91</accession>
<reference key="1">
    <citation type="journal article" date="1996" name="Mol. Cell. Biol.">
        <title>The Ras GTPase-activating-protein-related human protein IQGAP2 harbors a potential actin binding domain and interacts with calmodulin and Rho family GTPases.</title>
        <authorList>
            <person name="Brill S."/>
            <person name="Li S."/>
            <person name="Lyman C.W."/>
            <person name="Church D.M."/>
            <person name="Wasmuth J.J."/>
            <person name="Weissbach L."/>
            <person name="Bernards A."/>
            <person name="Snijders A.J."/>
        </authorList>
    </citation>
    <scope>NUCLEOTIDE SEQUENCE [MRNA] (ISOFORM 1)</scope>
    <scope>VARIANTS GLU-527; GLU-532; PHE-629 AND VAL-724</scope>
    <source>
        <tissue>Liver</tissue>
    </source>
</reference>
<reference key="2">
    <citation type="submission" date="2003-07" db="EMBL/GenBank/DDBJ databases">
        <title>Cloning and characterization of a novel isoform of IQGAP2 in human adult testis.</title>
        <authorList>
            <person name="Wang H."/>
            <person name="Huo R."/>
            <person name="Xu Z.Y."/>
            <person name="Xu M."/>
            <person name="Li J.M."/>
            <person name="Zhou Z.M."/>
            <person name="Sha J.H."/>
        </authorList>
    </citation>
    <scope>NUCLEOTIDE SEQUENCE [MRNA] (ISOFORM 2)</scope>
    <scope>VARIANTS GLU-527; GLU-532; PHE-629 AND VAL-724</scope>
</reference>
<reference key="3">
    <citation type="journal article" date="2004" name="Nat. Genet.">
        <title>Complete sequencing and characterization of 21,243 full-length human cDNAs.</title>
        <authorList>
            <person name="Ota T."/>
            <person name="Suzuki Y."/>
            <person name="Nishikawa T."/>
            <person name="Otsuki T."/>
            <person name="Sugiyama T."/>
            <person name="Irie R."/>
            <person name="Wakamatsu A."/>
            <person name="Hayashi K."/>
            <person name="Sato H."/>
            <person name="Nagai K."/>
            <person name="Kimura K."/>
            <person name="Makita H."/>
            <person name="Sekine M."/>
            <person name="Obayashi M."/>
            <person name="Nishi T."/>
            <person name="Shibahara T."/>
            <person name="Tanaka T."/>
            <person name="Ishii S."/>
            <person name="Yamamoto J."/>
            <person name="Saito K."/>
            <person name="Kawai Y."/>
            <person name="Isono Y."/>
            <person name="Nakamura Y."/>
            <person name="Nagahari K."/>
            <person name="Murakami K."/>
            <person name="Yasuda T."/>
            <person name="Iwayanagi T."/>
            <person name="Wagatsuma M."/>
            <person name="Shiratori A."/>
            <person name="Sudo H."/>
            <person name="Hosoiri T."/>
            <person name="Kaku Y."/>
            <person name="Kodaira H."/>
            <person name="Kondo H."/>
            <person name="Sugawara M."/>
            <person name="Takahashi M."/>
            <person name="Kanda K."/>
            <person name="Yokoi T."/>
            <person name="Furuya T."/>
            <person name="Kikkawa E."/>
            <person name="Omura Y."/>
            <person name="Abe K."/>
            <person name="Kamihara K."/>
            <person name="Katsuta N."/>
            <person name="Sato K."/>
            <person name="Tanikawa M."/>
            <person name="Yamazaki M."/>
            <person name="Ninomiya K."/>
            <person name="Ishibashi T."/>
            <person name="Yamashita H."/>
            <person name="Murakawa K."/>
            <person name="Fujimori K."/>
            <person name="Tanai H."/>
            <person name="Kimata M."/>
            <person name="Watanabe M."/>
            <person name="Hiraoka S."/>
            <person name="Chiba Y."/>
            <person name="Ishida S."/>
            <person name="Ono Y."/>
            <person name="Takiguchi S."/>
            <person name="Watanabe S."/>
            <person name="Yosida M."/>
            <person name="Hotuta T."/>
            <person name="Kusano J."/>
            <person name="Kanehori K."/>
            <person name="Takahashi-Fujii A."/>
            <person name="Hara H."/>
            <person name="Tanase T.-O."/>
            <person name="Nomura Y."/>
            <person name="Togiya S."/>
            <person name="Komai F."/>
            <person name="Hara R."/>
            <person name="Takeuchi K."/>
            <person name="Arita M."/>
            <person name="Imose N."/>
            <person name="Musashino K."/>
            <person name="Yuuki H."/>
            <person name="Oshima A."/>
            <person name="Sasaki N."/>
            <person name="Aotsuka S."/>
            <person name="Yoshikawa Y."/>
            <person name="Matsunawa H."/>
            <person name="Ichihara T."/>
            <person name="Shiohata N."/>
            <person name="Sano S."/>
            <person name="Moriya S."/>
            <person name="Momiyama H."/>
            <person name="Satoh N."/>
            <person name="Takami S."/>
            <person name="Terashima Y."/>
            <person name="Suzuki O."/>
            <person name="Nakagawa S."/>
            <person name="Senoh A."/>
            <person name="Mizoguchi H."/>
            <person name="Goto Y."/>
            <person name="Shimizu F."/>
            <person name="Wakebe H."/>
            <person name="Hishigaki H."/>
            <person name="Watanabe T."/>
            <person name="Sugiyama A."/>
            <person name="Takemoto M."/>
            <person name="Kawakami B."/>
            <person name="Yamazaki M."/>
            <person name="Watanabe K."/>
            <person name="Kumagai A."/>
            <person name="Itakura S."/>
            <person name="Fukuzumi Y."/>
            <person name="Fujimori Y."/>
            <person name="Komiyama M."/>
            <person name="Tashiro H."/>
            <person name="Tanigami A."/>
            <person name="Fujiwara T."/>
            <person name="Ono T."/>
            <person name="Yamada K."/>
            <person name="Fujii Y."/>
            <person name="Ozaki K."/>
            <person name="Hirao M."/>
            <person name="Ohmori Y."/>
            <person name="Kawabata A."/>
            <person name="Hikiji T."/>
            <person name="Kobatake N."/>
            <person name="Inagaki H."/>
            <person name="Ikema Y."/>
            <person name="Okamoto S."/>
            <person name="Okitani R."/>
            <person name="Kawakami T."/>
            <person name="Noguchi S."/>
            <person name="Itoh T."/>
            <person name="Shigeta K."/>
            <person name="Senba T."/>
            <person name="Matsumura K."/>
            <person name="Nakajima Y."/>
            <person name="Mizuno T."/>
            <person name="Morinaga M."/>
            <person name="Sasaki M."/>
            <person name="Togashi T."/>
            <person name="Oyama M."/>
            <person name="Hata H."/>
            <person name="Watanabe M."/>
            <person name="Komatsu T."/>
            <person name="Mizushima-Sugano J."/>
            <person name="Satoh T."/>
            <person name="Shirai Y."/>
            <person name="Takahashi Y."/>
            <person name="Nakagawa K."/>
            <person name="Okumura K."/>
            <person name="Nagase T."/>
            <person name="Nomura N."/>
            <person name="Kikuchi H."/>
            <person name="Masuho Y."/>
            <person name="Yamashita R."/>
            <person name="Nakai K."/>
            <person name="Yada T."/>
            <person name="Nakamura Y."/>
            <person name="Ohara O."/>
            <person name="Isogai T."/>
            <person name="Sugano S."/>
        </authorList>
    </citation>
    <scope>NUCLEOTIDE SEQUENCE [LARGE SCALE MRNA] (ISOFORMS 1 AND 3)</scope>
    <scope>VARIANTS GLU-527 AND GLU-532</scope>
    <source>
        <tissue>Teratocarcinoma</tissue>
        <tissue>Testis</tissue>
    </source>
</reference>
<reference key="4">
    <citation type="journal article" date="2004" name="Nature">
        <title>The DNA sequence and comparative analysis of human chromosome 5.</title>
        <authorList>
            <person name="Schmutz J."/>
            <person name="Martin J."/>
            <person name="Terry A."/>
            <person name="Couronne O."/>
            <person name="Grimwood J."/>
            <person name="Lowry S."/>
            <person name="Gordon L.A."/>
            <person name="Scott D."/>
            <person name="Xie G."/>
            <person name="Huang W."/>
            <person name="Hellsten U."/>
            <person name="Tran-Gyamfi M."/>
            <person name="She X."/>
            <person name="Prabhakar S."/>
            <person name="Aerts A."/>
            <person name="Altherr M."/>
            <person name="Bajorek E."/>
            <person name="Black S."/>
            <person name="Branscomb E."/>
            <person name="Caoile C."/>
            <person name="Challacombe J.F."/>
            <person name="Chan Y.M."/>
            <person name="Denys M."/>
            <person name="Detter J.C."/>
            <person name="Escobar J."/>
            <person name="Flowers D."/>
            <person name="Fotopulos D."/>
            <person name="Glavina T."/>
            <person name="Gomez M."/>
            <person name="Gonzales E."/>
            <person name="Goodstein D."/>
            <person name="Grigoriev I."/>
            <person name="Groza M."/>
            <person name="Hammon N."/>
            <person name="Hawkins T."/>
            <person name="Haydu L."/>
            <person name="Israni S."/>
            <person name="Jett J."/>
            <person name="Kadner K."/>
            <person name="Kimball H."/>
            <person name="Kobayashi A."/>
            <person name="Lopez F."/>
            <person name="Lou Y."/>
            <person name="Martinez D."/>
            <person name="Medina C."/>
            <person name="Morgan J."/>
            <person name="Nandkeshwar R."/>
            <person name="Noonan J.P."/>
            <person name="Pitluck S."/>
            <person name="Pollard M."/>
            <person name="Predki P."/>
            <person name="Priest J."/>
            <person name="Ramirez L."/>
            <person name="Retterer J."/>
            <person name="Rodriguez A."/>
            <person name="Rogers S."/>
            <person name="Salamov A."/>
            <person name="Salazar A."/>
            <person name="Thayer N."/>
            <person name="Tice H."/>
            <person name="Tsai M."/>
            <person name="Ustaszewska A."/>
            <person name="Vo N."/>
            <person name="Wheeler J."/>
            <person name="Wu K."/>
            <person name="Yang J."/>
            <person name="Dickson M."/>
            <person name="Cheng J.-F."/>
            <person name="Eichler E.E."/>
            <person name="Olsen A."/>
            <person name="Pennacchio L.A."/>
            <person name="Rokhsar D.S."/>
            <person name="Richardson P."/>
            <person name="Lucas S.M."/>
            <person name="Myers R.M."/>
            <person name="Rubin E.M."/>
        </authorList>
    </citation>
    <scope>NUCLEOTIDE SEQUENCE [LARGE SCALE GENOMIC DNA]</scope>
</reference>
<reference key="5">
    <citation type="journal article" date="2003" name="Nat. Biotechnol.">
        <title>Exploring proteomes and analyzing protein processing by mass spectrometric identification of sorted N-terminal peptides.</title>
        <authorList>
            <person name="Gevaert K."/>
            <person name="Goethals M."/>
            <person name="Martens L."/>
            <person name="Van Damme J."/>
            <person name="Staes A."/>
            <person name="Thomas G.R."/>
            <person name="Vandekerckhove J."/>
        </authorList>
    </citation>
    <scope>PROTEIN SEQUENCE OF 2-13 (ISOFORM 1)</scope>
    <source>
        <tissue>Platelet</tissue>
    </source>
</reference>
<reference key="6">
    <citation type="journal article" date="2008" name="Proteomics">
        <title>Large-scale phosphoproteome analysis of human liver tissue by enrichment and fractionation of phosphopeptides with strong anion exchange chromatography.</title>
        <authorList>
            <person name="Han G."/>
            <person name="Ye M."/>
            <person name="Zhou H."/>
            <person name="Jiang X."/>
            <person name="Feng S."/>
            <person name="Jiang X."/>
            <person name="Tian R."/>
            <person name="Wan D."/>
            <person name="Zou H."/>
            <person name="Gu J."/>
        </authorList>
    </citation>
    <scope>IDENTIFICATION BY MASS SPECTROMETRY [LARGE SCALE ANALYSIS]</scope>
    <source>
        <tissue>Liver</tissue>
    </source>
</reference>
<reference key="7">
    <citation type="journal article" date="2009" name="Sci. Signal.">
        <title>Quantitative phosphoproteomic analysis of T cell receptor signaling reveals system-wide modulation of protein-protein interactions.</title>
        <authorList>
            <person name="Mayya V."/>
            <person name="Lundgren D.H."/>
            <person name="Hwang S.-I."/>
            <person name="Rezaul K."/>
            <person name="Wu L."/>
            <person name="Eng J.K."/>
            <person name="Rodionov V."/>
            <person name="Han D.K."/>
        </authorList>
    </citation>
    <scope>PHOSPHORYLATION [LARGE SCALE ANALYSIS] AT SER-16</scope>
    <scope>IDENTIFICATION BY MASS SPECTROMETRY [LARGE SCALE ANALYSIS]</scope>
    <source>
        <tissue>Leukemic T-cell</tissue>
    </source>
</reference>
<reference key="8">
    <citation type="journal article" date="2011" name="Sci. Signal.">
        <title>System-wide temporal characterization of the proteome and phosphoproteome of human embryonic stem cell differentiation.</title>
        <authorList>
            <person name="Rigbolt K.T."/>
            <person name="Prokhorova T.A."/>
            <person name="Akimov V."/>
            <person name="Henningsen J."/>
            <person name="Johansen P.T."/>
            <person name="Kratchmarova I."/>
            <person name="Kassem M."/>
            <person name="Mann M."/>
            <person name="Olsen J.V."/>
            <person name="Blagoev B."/>
        </authorList>
    </citation>
    <scope>PHOSPHORYLATION [LARGE SCALE ANALYSIS] AT SER-16</scope>
    <scope>IDENTIFICATION BY MASS SPECTROMETRY [LARGE SCALE ANALYSIS]</scope>
</reference>
<reference key="9">
    <citation type="journal article" date="2013" name="J. Proteome Res.">
        <title>Toward a comprehensive characterization of a human cancer cell phosphoproteome.</title>
        <authorList>
            <person name="Zhou H."/>
            <person name="Di Palma S."/>
            <person name="Preisinger C."/>
            <person name="Peng M."/>
            <person name="Polat A.N."/>
            <person name="Heck A.J."/>
            <person name="Mohammed S."/>
        </authorList>
    </citation>
    <scope>PHOSPHORYLATION [LARGE SCALE ANALYSIS] AT SER-16; SER-595; SER-1358 AND SER-1461</scope>
    <scope>IDENTIFICATION BY MASS SPECTROMETRY [LARGE SCALE ANALYSIS]</scope>
    <source>
        <tissue>Erythroleukemia</tissue>
    </source>
</reference>
<reference key="10">
    <citation type="journal article" date="2014" name="J. Proteomics">
        <title>An enzyme assisted RP-RPLC approach for in-depth analysis of human liver phosphoproteome.</title>
        <authorList>
            <person name="Bian Y."/>
            <person name="Song C."/>
            <person name="Cheng K."/>
            <person name="Dong M."/>
            <person name="Wang F."/>
            <person name="Huang J."/>
            <person name="Sun D."/>
            <person name="Wang L."/>
            <person name="Ye M."/>
            <person name="Zou H."/>
        </authorList>
    </citation>
    <scope>PHOSPHORYLATION [LARGE SCALE ANALYSIS] AT SER-16; THR-356; SER-599; SER-685; THR-716; THR-782; THR-1002; THR-1269; SER-1271; SER-1279 AND SER-1358</scope>
    <scope>IDENTIFICATION BY MASS SPECTROMETRY [LARGE SCALE ANALYSIS]</scope>
    <source>
        <tissue>Liver</tissue>
    </source>
</reference>
<reference key="11">
    <citation type="journal article" date="2015" name="Proteomics">
        <title>N-terminome analysis of the human mitochondrial proteome.</title>
        <authorList>
            <person name="Vaca Jacome A.S."/>
            <person name="Rabilloud T."/>
            <person name="Schaeffer-Reiss C."/>
            <person name="Rompais M."/>
            <person name="Ayoub D."/>
            <person name="Lane L."/>
            <person name="Bairoch A."/>
            <person name="Van Dorsselaer A."/>
            <person name="Carapito C."/>
        </authorList>
    </citation>
    <scope>IDENTIFICATION BY MASS SPECTROMETRY [LARGE SCALE ANALYSIS]</scope>
</reference>
<reference key="12">
    <citation type="journal article" date="2011" name="BMC Syst. Biol.">
        <title>Initial characterization of the human central proteome.</title>
        <authorList>
            <person name="Burkard T.R."/>
            <person name="Planyavsky M."/>
            <person name="Kaupe I."/>
            <person name="Breitwieser F.P."/>
            <person name="Buerckstuemmer T."/>
            <person name="Bennett K.L."/>
            <person name="Superti-Furga G."/>
            <person name="Colinge J."/>
        </authorList>
    </citation>
    <scope>VARIANT [LARGE SCALE ANALYSIS] PHE-629</scope>
    <scope>IDENTIFICATION BY MASS SPECTROMETRY [LARGE SCALE ANALYSIS]</scope>
</reference>
<reference key="13">
    <citation type="journal article" date="2012" name="N. Engl. J. Med.">
        <title>Diagnostic exome sequencing in persons with severe intellectual disability.</title>
        <authorList>
            <person name="de Ligt J."/>
            <person name="Willemsen M.H."/>
            <person name="van Bon B.W."/>
            <person name="Kleefstra T."/>
            <person name="Yntema H.G."/>
            <person name="Kroes T."/>
            <person name="Vulto-van Silfhout A.T."/>
            <person name="Koolen D.A."/>
            <person name="de Vries P."/>
            <person name="Gilissen C."/>
            <person name="del Rosario M."/>
            <person name="Hoischen A."/>
            <person name="Scheffer H."/>
            <person name="de Vries B.B."/>
            <person name="Brunner H.G."/>
            <person name="Veltman J.A."/>
            <person name="Vissers L.E."/>
        </authorList>
    </citation>
    <scope>VARIANTS CYS-1445 AND ILE-1530</scope>
</reference>
<keyword id="KW-0002">3D-structure</keyword>
<keyword id="KW-0025">Alternative splicing</keyword>
<keyword id="KW-0112">Calmodulin-binding</keyword>
<keyword id="KW-0903">Direct protein sequencing</keyword>
<keyword id="KW-0597">Phosphoprotein</keyword>
<keyword id="KW-1267">Proteomics identification</keyword>
<keyword id="KW-1185">Reference proteome</keyword>
<keyword id="KW-0677">Repeat</keyword>
<sequence length="1575" mass="180578">MPHEELPSLQRPRYGSIVDDERLSAEEMDERRRQNIAYEYLCHLEEAKRWMEVCLVEELPPTTELEEGLRNGVYLAKLAKFFAPKMVSEKKIYDVEQTRYKKSGLHFRHTDNTVQWLRAMESIGLPKIFYPETTDVYDRKNIPRMIYCIHALSLYLFKLGIAPQIQDLLGKVDFTEEEISNMRKELEKYGIQMPSFSKIGGILANELSVDEAALHAAVIAINEAVEKGIAEQTVVTLRNPNAVLTLVDDNLAPEYQKELWDAKKKKEENARLKNSCISEEERDAYEELLTQAEIQGNINKVNRQAAVDHINAVIPEGDPENTLLALKKPEAQLPAVYPFAAAMYQNELFNLQKQNTMNYLAHEELLIAVEMLSAVALLNQALESNDLVSVQNQLRSPAIGLNNLDKAYVERYANTLLSVKLEVLSQGQDNLSWNEIQNCIDMVNAQIQEENDRVVAVGYINEAIDEGNPLRTLETLLLPTANISDVDPAHAQHYQDVLYHAKSQKLGDSESVSKVLWLDEIQQAVDDANVDKDRAKQWVTLVVDVNQCLEGKKSSDILSVLKSSTSNANDIIPECADKYYDALVKAKELKSERVSSDGSWLKLNLHKKYDYYYNTDSKESSWVTPESCLYKESWLTGKEIEDIIEEVTVGYIRENIWSASEELLLRFQATSSGPILREEFEARKSFLHEQEENVVKIQAFWKGYKQRKEYMHRRQTFIDNTDSIVKIQSWFRMATARKSYLSRLQYFRDHNNEIVKIQSLLRANKARDDYKTLVGSENPPLTVIRKFVYLLDQSDLDFQEELEVARLREEVVTKIRANQQLEKDLNLMDIKIGLLVKNRITLEDVISHSKKLNKKKGGEMEILNNTDNQGIKSLSKERRKTLETYQQLFYLLQTNPLYLAKLIFQMPQNKSTKFMDTVIFTLYNYASNQREEYLLLKLFKTALEEEIKSKVDQVQDIVTGNPTVIKMVVSFNRGARGQNTLRQLLAPVVKEIIDDKSLIINTNPVEVYKAWVNQLETQTGEASKLPYDVTTEQALTYPEVKNKLEASIENLRRVTDKVLNSIISSLDLLPYGLRYIAKVLKNSIHEKFPDATEDELLKIVGNLLYYRYMNPAIVAPDGFDIIDMTAGGQINSDQRRNLGSVAKVLQHAASNKLFEGENEHLSSMNNYLSETYQEFRKYFKEACNVPEPEEKFNMDKYTDLVTVSKPVIYISIEEIISTHSLLLEHQDAIAPEKNDLLSELLGSLGEVPTVESFLGEGAVDPNDPNKANTLSQLSKTEISLVLTSKYDIEDGEAIDSRSLMIKTKKLIIDVIRNQPGNTLTEILETPATAQQEVDHATDMVSRAMIDSRTPEEMKHSQSMIEDAQLPLEQKKRKIQRNLRTLEQTGHVSSENKYQDILNEIAKDIRNQRIYRKLRKAELAKLQQTLNALNKKAAFYEEQINYYDTYIKTCLDNLKRKNTRRSIKLDGKGEPKGAKRAKPVKYTAAKLHEKGVLLDIDDLQTNQFKNVTFDIIATEDVGIFDVRSKFLGVEMEKVQLNIQDLLQMQYEGVAVMKMFDKVKVNVNLLIYLLNKKFYGK</sequence>
<evidence type="ECO:0000250" key="1">
    <source>
        <dbReference type="UniProtKB" id="Q3UQ44"/>
    </source>
</evidence>
<evidence type="ECO:0000255" key="2">
    <source>
        <dbReference type="PROSITE-ProRule" id="PRU00044"/>
    </source>
</evidence>
<evidence type="ECO:0000255" key="3">
    <source>
        <dbReference type="PROSITE-ProRule" id="PRU00116"/>
    </source>
</evidence>
<evidence type="ECO:0000255" key="4">
    <source>
        <dbReference type="PROSITE-ProRule" id="PRU00167"/>
    </source>
</evidence>
<evidence type="ECO:0000255" key="5">
    <source>
        <dbReference type="PROSITE-ProRule" id="PRU00224"/>
    </source>
</evidence>
<evidence type="ECO:0000269" key="6">
    <source>
    </source>
</evidence>
<evidence type="ECO:0000269" key="7">
    <source>
    </source>
</evidence>
<evidence type="ECO:0000269" key="8">
    <source>
    </source>
</evidence>
<evidence type="ECO:0000269" key="9">
    <source ref="2"/>
</evidence>
<evidence type="ECO:0000303" key="10">
    <source>
    </source>
</evidence>
<evidence type="ECO:0000303" key="11">
    <source ref="2"/>
</evidence>
<evidence type="ECO:0000305" key="12"/>
<evidence type="ECO:0007744" key="13">
    <source>
    </source>
</evidence>
<evidence type="ECO:0007744" key="14">
    <source>
    </source>
</evidence>
<evidence type="ECO:0007744" key="15">
    <source>
    </source>
</evidence>
<evidence type="ECO:0007744" key="16">
    <source>
    </source>
</evidence>
<evidence type="ECO:0007744" key="17">
    <source>
    </source>
</evidence>
<evidence type="ECO:0007829" key="18">
    <source>
        <dbReference type="PDB" id="3IEZ"/>
    </source>
</evidence>
<evidence type="ECO:0007829" key="19">
    <source>
        <dbReference type="PDB" id="5CJP"/>
    </source>
</evidence>
<gene>
    <name type="primary">IQGAP2</name>
</gene>
<protein>
    <recommendedName>
        <fullName>Ras GTPase-activating-like protein IQGAP2</fullName>
    </recommendedName>
</protein>
<proteinExistence type="evidence at protein level"/>
<name>IQGA2_HUMAN</name>
<feature type="chain" id="PRO_0000056650" description="Ras GTPase-activating-like protein IQGAP2">
    <location>
        <begin position="1"/>
        <end position="1575"/>
    </location>
</feature>
<feature type="domain" description="Calponin-homology (CH)" evidence="2">
    <location>
        <begin position="41"/>
        <end position="156"/>
    </location>
</feature>
<feature type="domain" description="WW" evidence="5">
    <location>
        <begin position="594"/>
        <end position="627"/>
    </location>
</feature>
<feature type="domain" description="IQ 1" evidence="3">
    <location>
        <begin position="690"/>
        <end position="719"/>
    </location>
</feature>
<feature type="domain" description="IQ 2" evidence="3">
    <location>
        <begin position="720"/>
        <end position="749"/>
    </location>
</feature>
<feature type="domain" description="IQ 3" evidence="3">
    <location>
        <begin position="750"/>
        <end position="779"/>
    </location>
</feature>
<feature type="domain" description="Ras-GAP" evidence="4">
    <location>
        <begin position="933"/>
        <end position="1182"/>
    </location>
</feature>
<feature type="modified residue" description="Phosphoserine" evidence="13 15 16 17">
    <location>
        <position position="16"/>
    </location>
</feature>
<feature type="modified residue" description="Phosphothreonine" evidence="17">
    <location>
        <position position="356"/>
    </location>
</feature>
<feature type="modified residue" description="Phosphoserine" evidence="16">
    <location>
        <position position="595"/>
    </location>
</feature>
<feature type="modified residue" description="Phosphoserine" evidence="17">
    <location>
        <position position="599"/>
    </location>
</feature>
<feature type="modified residue" description="Phosphoserine" evidence="17">
    <location>
        <position position="685"/>
    </location>
</feature>
<feature type="modified residue" description="Phosphothreonine" evidence="17">
    <location>
        <position position="716"/>
    </location>
</feature>
<feature type="modified residue" description="Phosphothreonine" evidence="17">
    <location>
        <position position="782"/>
    </location>
</feature>
<feature type="modified residue" description="Phosphothreonine" evidence="1">
    <location>
        <position position="881"/>
    </location>
</feature>
<feature type="modified residue" description="Phosphothreonine" evidence="17">
    <location>
        <position position="1002"/>
    </location>
</feature>
<feature type="modified residue" description="Phosphothreonine" evidence="17">
    <location>
        <position position="1269"/>
    </location>
</feature>
<feature type="modified residue" description="Phosphoserine" evidence="17">
    <location>
        <position position="1271"/>
    </location>
</feature>
<feature type="modified residue" description="Phosphoserine" evidence="17">
    <location>
        <position position="1279"/>
    </location>
</feature>
<feature type="modified residue" description="Phosphoserine" evidence="16 17">
    <location>
        <position position="1358"/>
    </location>
</feature>
<feature type="modified residue" description="Phosphoserine" evidence="16">
    <location>
        <position position="1461"/>
    </location>
</feature>
<feature type="splice variant" id="VSP_010629" description="In isoform 2 and isoform 3." evidence="10 11">
    <location>
        <begin position="1"/>
        <end position="447"/>
    </location>
</feature>
<feature type="splice variant" id="VSP_010630" description="In isoform 2." evidence="11">
    <original>QEENDR</original>
    <variation>MHSLPG</variation>
    <location>
        <begin position="448"/>
        <end position="453"/>
    </location>
</feature>
<feature type="splice variant" id="VSP_055149" description="In isoform 3." evidence="10">
    <original>QEENDR</original>
    <variation>MGCFKG</variation>
    <location>
        <begin position="448"/>
        <end position="453"/>
    </location>
</feature>
<feature type="splice variant" id="VSP_010631" description="In isoform 2 and isoform 3." evidence="10 11">
    <location>
        <begin position="642"/>
        <end position="698"/>
    </location>
</feature>
<feature type="sequence variant" id="VAR_055823" description="In dbSNP:rs7722711.">
    <original>V</original>
    <variation>A</variation>
    <location>
        <position position="455"/>
    </location>
</feature>
<feature type="sequence variant" id="VAR_055824" description="In dbSNP:rs3822530.">
    <original>P</original>
    <variation>R</variation>
    <location>
        <position position="479"/>
    </location>
</feature>
<feature type="sequence variant" id="VAR_062958" description="In dbSNP:rs2431352." evidence="6 8 9">
    <original>D</original>
    <variation>E</variation>
    <location>
        <position position="527"/>
    </location>
</feature>
<feature type="sequence variant" id="VAR_059292" description="In dbSNP:rs2909888." evidence="6 8 9">
    <original>K</original>
    <variation>E</variation>
    <location>
        <position position="532"/>
    </location>
</feature>
<feature type="sequence variant" id="VAR_062959" description="In dbSNP:rs2455230." evidence="8 9 14">
    <original>L</original>
    <variation>F</variation>
    <location>
        <position position="629"/>
    </location>
</feature>
<feature type="sequence variant" id="VAR_055825" description="In dbSNP:rs35366349.">
    <original>R</original>
    <variation>W</variation>
    <location>
        <position position="714"/>
    </location>
</feature>
<feature type="sequence variant" id="VAR_062960" description="In dbSNP:rs2431363." evidence="8 9">
    <original>I</original>
    <variation>V</variation>
    <location>
        <position position="724"/>
    </location>
</feature>
<feature type="sequence variant" id="VAR_055826" description="In dbSNP:rs34950321.">
    <original>T</original>
    <variation>I</variation>
    <location>
        <position position="894"/>
    </location>
</feature>
<feature type="sequence variant" id="VAR_055827" description="In dbSNP:rs2287932.">
    <original>R</original>
    <variation>I</variation>
    <location>
        <position position="1052"/>
    </location>
</feature>
<feature type="sequence variant" id="VAR_055828" description="In dbSNP:rs10454915.">
    <original>N</original>
    <variation>S</variation>
    <location>
        <position position="1184"/>
    </location>
</feature>
<feature type="sequence variant" id="VAR_055829" description="In dbSNP:rs17681908.">
    <original>R</original>
    <variation>W</variation>
    <location>
        <position position="1379"/>
    </location>
</feature>
<feature type="sequence variant" id="VAR_069434" description="In dbSNP:rs369078465." evidence="7">
    <original>Y</original>
    <variation>C</variation>
    <location>
        <position position="1445"/>
    </location>
</feature>
<feature type="sequence variant" id="VAR_069435" description="In dbSNP:rs150409607." evidence="7">
    <original>M</original>
    <variation>I</variation>
    <location>
        <position position="1530"/>
    </location>
</feature>
<feature type="sequence conflict" description="In Ref. 3; BAF83755." evidence="12" ref="3">
    <original>V</original>
    <variation>E</variation>
    <location>
        <position position="95"/>
    </location>
</feature>
<feature type="sequence conflict" description="In Ref. 3; BAF83755." evidence="12" ref="3">
    <original>N</original>
    <variation>S</variation>
    <location>
        <position position="778"/>
    </location>
</feature>
<feature type="sequence conflict" description="In Ref. 3; BAF83755." evidence="12" ref="3">
    <original>G</original>
    <variation>R</variation>
    <location>
        <position position="1101"/>
    </location>
</feature>
<feature type="sequence conflict" description="In Ref. 3; BAH13890." evidence="12" ref="3">
    <original>V</original>
    <variation>L</variation>
    <location>
        <position position="1333"/>
    </location>
</feature>
<feature type="helix" evidence="19">
    <location>
        <begin position="878"/>
        <end position="894"/>
    </location>
</feature>
<feature type="helix" evidence="19">
    <location>
        <begin position="896"/>
        <end position="905"/>
    </location>
</feature>
<feature type="helix" evidence="19">
    <location>
        <begin position="908"/>
        <end position="911"/>
    </location>
</feature>
<feature type="turn" evidence="19">
    <location>
        <begin position="912"/>
        <end position="914"/>
    </location>
</feature>
<feature type="helix" evidence="19">
    <location>
        <begin position="915"/>
        <end position="925"/>
    </location>
</feature>
<feature type="helix" evidence="19">
    <location>
        <begin position="929"/>
        <end position="950"/>
    </location>
</feature>
<feature type="strand" evidence="19">
    <location>
        <begin position="952"/>
        <end position="955"/>
    </location>
</feature>
<feature type="helix" evidence="19">
    <location>
        <begin position="956"/>
        <end position="959"/>
    </location>
</feature>
<feature type="helix" evidence="19">
    <location>
        <begin position="963"/>
        <end position="973"/>
    </location>
</feature>
<feature type="strand" evidence="19">
    <location>
        <begin position="974"/>
        <end position="977"/>
    </location>
</feature>
<feature type="helix" evidence="19">
    <location>
        <begin position="982"/>
        <end position="994"/>
    </location>
</feature>
<feature type="helix" evidence="19">
    <location>
        <begin position="1004"/>
        <end position="1010"/>
    </location>
</feature>
<feature type="helix" evidence="19">
    <location>
        <begin position="1012"/>
        <end position="1015"/>
    </location>
</feature>
<feature type="helix" evidence="19">
    <location>
        <begin position="1016"/>
        <end position="1018"/>
    </location>
</feature>
<feature type="helix" evidence="19">
    <location>
        <begin position="1031"/>
        <end position="1034"/>
    </location>
</feature>
<feature type="helix" evidence="19">
    <location>
        <begin position="1038"/>
        <end position="1064"/>
    </location>
</feature>
<feature type="helix" evidence="19">
    <location>
        <begin position="1065"/>
        <end position="1068"/>
    </location>
</feature>
<feature type="helix" evidence="19">
    <location>
        <begin position="1071"/>
        <end position="1087"/>
    </location>
</feature>
<feature type="helix" evidence="19">
    <location>
        <begin position="1093"/>
        <end position="1104"/>
    </location>
</feature>
<feature type="helix" evidence="19">
    <location>
        <begin position="1105"/>
        <end position="1109"/>
    </location>
</feature>
<feature type="helix" evidence="19">
    <location>
        <begin position="1110"/>
        <end position="1114"/>
    </location>
</feature>
<feature type="turn" evidence="19">
    <location>
        <begin position="1116"/>
        <end position="1120"/>
    </location>
</feature>
<feature type="helix" evidence="19">
    <location>
        <begin position="1132"/>
        <end position="1149"/>
    </location>
</feature>
<feature type="helix" evidence="19">
    <location>
        <begin position="1159"/>
        <end position="1164"/>
    </location>
</feature>
<feature type="helix" evidence="19">
    <location>
        <begin position="1165"/>
        <end position="1182"/>
    </location>
</feature>
<feature type="helix" evidence="19">
    <location>
        <begin position="1188"/>
        <end position="1191"/>
    </location>
</feature>
<feature type="turn" evidence="19">
    <location>
        <begin position="1192"/>
        <end position="1194"/>
    </location>
</feature>
<feature type="helix" evidence="19">
    <location>
        <begin position="1195"/>
        <end position="1198"/>
    </location>
</feature>
<feature type="strand" evidence="19">
    <location>
        <begin position="1208"/>
        <end position="1214"/>
    </location>
</feature>
<feature type="helix" evidence="19">
    <location>
        <begin position="1223"/>
        <end position="1225"/>
    </location>
</feature>
<feature type="helix" evidence="19">
    <location>
        <begin position="1226"/>
        <end position="1229"/>
    </location>
</feature>
<feature type="helix" evidence="19">
    <location>
        <begin position="1232"/>
        <end position="1243"/>
    </location>
</feature>
<feature type="strand" evidence="18">
    <location>
        <begin position="1479"/>
        <end position="1482"/>
    </location>
</feature>
<feature type="helix" evidence="18">
    <location>
        <begin position="1483"/>
        <end position="1488"/>
    </location>
</feature>
<feature type="strand" evidence="18">
    <location>
        <begin position="1491"/>
        <end position="1495"/>
    </location>
</feature>
<feature type="helix" evidence="18">
    <location>
        <begin position="1500"/>
        <end position="1505"/>
    </location>
</feature>
<feature type="strand" evidence="18">
    <location>
        <begin position="1506"/>
        <end position="1512"/>
    </location>
</feature>
<feature type="strand" evidence="18">
    <location>
        <begin position="1518"/>
        <end position="1525"/>
    </location>
</feature>
<feature type="strand" evidence="18">
    <location>
        <begin position="1528"/>
        <end position="1536"/>
    </location>
</feature>
<feature type="helix" evidence="18">
    <location>
        <begin position="1537"/>
        <end position="1545"/>
    </location>
</feature>
<feature type="strand" evidence="18">
    <location>
        <begin position="1550"/>
        <end position="1554"/>
    </location>
</feature>
<feature type="strand" evidence="18">
    <location>
        <begin position="1557"/>
        <end position="1560"/>
    </location>
</feature>
<feature type="helix" evidence="18">
    <location>
        <begin position="1561"/>
        <end position="1569"/>
    </location>
</feature>
<comment type="function">
    <text>Binds to activated CDC42 and RAC1 but does not seem to stimulate their GTPase activity. Associates with calmodulin.</text>
</comment>
<comment type="alternative products">
    <event type="alternative splicing"/>
    <isoform>
        <id>Q13576-1</id>
        <name>1</name>
        <sequence type="displayed"/>
    </isoform>
    <isoform>
        <id>Q13576-2</id>
        <name>2</name>
        <sequence type="described" ref="VSP_010629 VSP_010630 VSP_010631"/>
    </isoform>
    <isoform>
        <id>Q13576-3</id>
        <name>3</name>
        <sequence type="described" ref="VSP_010629 VSP_055149 VSP_010631"/>
    </isoform>
</comment>
<comment type="tissue specificity">
    <text>Isoform 2 expression is enhanced in testis.</text>
</comment>
<organism>
    <name type="scientific">Homo sapiens</name>
    <name type="common">Human</name>
    <dbReference type="NCBI Taxonomy" id="9606"/>
    <lineage>
        <taxon>Eukaryota</taxon>
        <taxon>Metazoa</taxon>
        <taxon>Chordata</taxon>
        <taxon>Craniata</taxon>
        <taxon>Vertebrata</taxon>
        <taxon>Euteleostomi</taxon>
        <taxon>Mammalia</taxon>
        <taxon>Eutheria</taxon>
        <taxon>Euarchontoglires</taxon>
        <taxon>Primates</taxon>
        <taxon>Haplorrhini</taxon>
        <taxon>Catarrhini</taxon>
        <taxon>Hominidae</taxon>
        <taxon>Homo</taxon>
    </lineage>
</organism>
<dbReference type="EMBL" id="U51903">
    <property type="protein sequence ID" value="AAB37765.1"/>
    <property type="molecule type" value="mRNA"/>
</dbReference>
<dbReference type="EMBL" id="AY351902">
    <property type="protein sequence ID" value="AAQ81291.1"/>
    <property type="molecule type" value="mRNA"/>
</dbReference>
<dbReference type="EMBL" id="AK291066">
    <property type="protein sequence ID" value="BAF83755.1"/>
    <property type="molecule type" value="mRNA"/>
</dbReference>
<dbReference type="EMBL" id="AK303054">
    <property type="protein sequence ID" value="BAH13890.1"/>
    <property type="molecule type" value="mRNA"/>
</dbReference>
<dbReference type="EMBL" id="AC025188">
    <property type="status" value="NOT_ANNOTATED_CDS"/>
    <property type="molecule type" value="Genomic_DNA"/>
</dbReference>
<dbReference type="EMBL" id="AC026706">
    <property type="status" value="NOT_ANNOTATED_CDS"/>
    <property type="molecule type" value="Genomic_DNA"/>
</dbReference>
<dbReference type="EMBL" id="AC026725">
    <property type="status" value="NOT_ANNOTATED_CDS"/>
    <property type="molecule type" value="Genomic_DNA"/>
</dbReference>
<dbReference type="EMBL" id="AC093251">
    <property type="status" value="NOT_ANNOTATED_CDS"/>
    <property type="molecule type" value="Genomic_DNA"/>
</dbReference>
<dbReference type="EMBL" id="AC112173">
    <property type="status" value="NOT_ANNOTATED_CDS"/>
    <property type="molecule type" value="Genomic_DNA"/>
</dbReference>
<dbReference type="CCDS" id="CCDS34188.1">
    <molecule id="Q13576-1"/>
</dbReference>
<dbReference type="CCDS" id="CCDS68897.1">
    <molecule id="Q13576-2"/>
</dbReference>
<dbReference type="CCDS" id="CCDS68898.1">
    <molecule id="Q13576-3"/>
</dbReference>
<dbReference type="RefSeq" id="NP_001272389.1">
    <property type="nucleotide sequence ID" value="NM_001285460.1"/>
</dbReference>
<dbReference type="RefSeq" id="NP_001272390.2">
    <molecule id="Q13576-2"/>
    <property type="nucleotide sequence ID" value="NM_001285461.2"/>
</dbReference>
<dbReference type="RefSeq" id="NP_001272391.2">
    <molecule id="Q13576-3"/>
    <property type="nucleotide sequence ID" value="NM_001285462.2"/>
</dbReference>
<dbReference type="RefSeq" id="NP_006624.3">
    <molecule id="Q13576-1"/>
    <property type="nucleotide sequence ID" value="NM_006633.5"/>
</dbReference>
<dbReference type="PDB" id="3IEZ">
    <property type="method" value="X-ray"/>
    <property type="resolution" value="1.50 A"/>
    <property type="chains" value="A/B=1476-1571"/>
</dbReference>
<dbReference type="PDB" id="4EZA">
    <property type="method" value="X-ray"/>
    <property type="resolution" value="1.50 A"/>
    <property type="chains" value="A/B=1476-1571"/>
</dbReference>
<dbReference type="PDB" id="5CJP">
    <property type="method" value="X-ray"/>
    <property type="resolution" value="2.60 A"/>
    <property type="chains" value="E/F=875-1258"/>
</dbReference>
<dbReference type="PDBsum" id="3IEZ"/>
<dbReference type="PDBsum" id="4EZA"/>
<dbReference type="PDBsum" id="5CJP"/>
<dbReference type="SMR" id="Q13576"/>
<dbReference type="BioGRID" id="116004">
    <property type="interactions" value="179"/>
</dbReference>
<dbReference type="CORUM" id="Q13576"/>
<dbReference type="DIP" id="DIP-27542N"/>
<dbReference type="FunCoup" id="Q13576">
    <property type="interactions" value="881"/>
</dbReference>
<dbReference type="IntAct" id="Q13576">
    <property type="interactions" value="70"/>
</dbReference>
<dbReference type="MINT" id="Q13576"/>
<dbReference type="STRING" id="9606.ENSP00000274364"/>
<dbReference type="CarbonylDB" id="Q13576"/>
<dbReference type="GlyCosmos" id="Q13576">
    <property type="glycosylation" value="1 site, 2 glycans"/>
</dbReference>
<dbReference type="GlyGen" id="Q13576">
    <property type="glycosylation" value="4 sites, 2 O-linked glycans (4 sites)"/>
</dbReference>
<dbReference type="iPTMnet" id="Q13576"/>
<dbReference type="MetOSite" id="Q13576"/>
<dbReference type="PhosphoSitePlus" id="Q13576"/>
<dbReference type="BioMuta" id="IQGAP2"/>
<dbReference type="DMDM" id="292495090"/>
<dbReference type="OGP" id="Q13576"/>
<dbReference type="jPOST" id="Q13576"/>
<dbReference type="MassIVE" id="Q13576"/>
<dbReference type="PaxDb" id="9606-ENSP00000274364"/>
<dbReference type="PeptideAtlas" id="Q13576"/>
<dbReference type="ProteomicsDB" id="59581">
    <molecule id="Q13576-1"/>
</dbReference>
<dbReference type="ProteomicsDB" id="59582">
    <molecule id="Q13576-2"/>
</dbReference>
<dbReference type="Pumba" id="Q13576"/>
<dbReference type="Antibodypedia" id="3789">
    <property type="antibodies" value="207 antibodies from 34 providers"/>
</dbReference>
<dbReference type="DNASU" id="10788"/>
<dbReference type="Ensembl" id="ENST00000274364.11">
    <molecule id="Q13576-1"/>
    <property type="protein sequence ID" value="ENSP00000274364.6"/>
    <property type="gene ID" value="ENSG00000145703.17"/>
</dbReference>
<dbReference type="Ensembl" id="ENST00000396234.7">
    <molecule id="Q13576-2"/>
    <property type="protein sequence ID" value="ENSP00000379535.3"/>
    <property type="gene ID" value="ENSG00000145703.17"/>
</dbReference>
<dbReference type="Ensembl" id="ENST00000502745.5">
    <molecule id="Q13576-3"/>
    <property type="protein sequence ID" value="ENSP00000426027.1"/>
    <property type="gene ID" value="ENSG00000145703.17"/>
</dbReference>
<dbReference type="GeneID" id="10788"/>
<dbReference type="KEGG" id="hsa:10788"/>
<dbReference type="MANE-Select" id="ENST00000274364.11">
    <property type="protein sequence ID" value="ENSP00000274364.6"/>
    <property type="RefSeq nucleotide sequence ID" value="NM_006633.5"/>
    <property type="RefSeq protein sequence ID" value="NP_006624.3"/>
</dbReference>
<dbReference type="UCSC" id="uc003kek.5">
    <molecule id="Q13576-1"/>
    <property type="organism name" value="human"/>
</dbReference>
<dbReference type="AGR" id="HGNC:6111"/>
<dbReference type="CTD" id="10788"/>
<dbReference type="DisGeNET" id="10788"/>
<dbReference type="GeneCards" id="IQGAP2"/>
<dbReference type="HGNC" id="HGNC:6111">
    <property type="gene designation" value="IQGAP2"/>
</dbReference>
<dbReference type="HPA" id="ENSG00000145703">
    <property type="expression patterns" value="Tissue enhanced (liver)"/>
</dbReference>
<dbReference type="MIM" id="605401">
    <property type="type" value="gene"/>
</dbReference>
<dbReference type="neXtProt" id="NX_Q13576"/>
<dbReference type="OpenTargets" id="ENSG00000145703"/>
<dbReference type="PharmGKB" id="PA29911"/>
<dbReference type="VEuPathDB" id="HostDB:ENSG00000145703"/>
<dbReference type="eggNOG" id="KOG2128">
    <property type="taxonomic scope" value="Eukaryota"/>
</dbReference>
<dbReference type="GeneTree" id="ENSGT00950000183076"/>
<dbReference type="HOGENOM" id="CLU_000972_2_1_1"/>
<dbReference type="InParanoid" id="Q13576"/>
<dbReference type="OMA" id="CANKYYD"/>
<dbReference type="OrthoDB" id="775356at2759"/>
<dbReference type="PAN-GO" id="Q13576">
    <property type="GO annotations" value="5 GO annotations based on evolutionary models"/>
</dbReference>
<dbReference type="PhylomeDB" id="Q13576"/>
<dbReference type="TreeFam" id="TF313078"/>
<dbReference type="PathwayCommons" id="Q13576"/>
<dbReference type="Reactome" id="R-HSA-5626467">
    <property type="pathway name" value="RHO GTPases activate IQGAPs"/>
</dbReference>
<dbReference type="Reactome" id="R-HSA-6798695">
    <property type="pathway name" value="Neutrophil degranulation"/>
</dbReference>
<dbReference type="Reactome" id="R-HSA-9013148">
    <property type="pathway name" value="CDC42 GTPase cycle"/>
</dbReference>
<dbReference type="Reactome" id="R-HSA-9013149">
    <property type="pathway name" value="RAC1 GTPase cycle"/>
</dbReference>
<dbReference type="Reactome" id="R-HSA-9013408">
    <property type="pathway name" value="RHOG GTPase cycle"/>
</dbReference>
<dbReference type="SignaLink" id="Q13576"/>
<dbReference type="SIGNOR" id="Q13576"/>
<dbReference type="BioGRID-ORCS" id="10788">
    <property type="hits" value="13 hits in 1160 CRISPR screens"/>
</dbReference>
<dbReference type="ChiTaRS" id="IQGAP2">
    <property type="organism name" value="human"/>
</dbReference>
<dbReference type="EvolutionaryTrace" id="Q13576"/>
<dbReference type="GeneWiki" id="IQGAP2"/>
<dbReference type="GenomeRNAi" id="10788"/>
<dbReference type="Pharos" id="Q13576">
    <property type="development level" value="Tbio"/>
</dbReference>
<dbReference type="PRO" id="PR:Q13576"/>
<dbReference type="Proteomes" id="UP000005640">
    <property type="component" value="Chromosome 5"/>
</dbReference>
<dbReference type="RNAct" id="Q13576">
    <property type="molecule type" value="protein"/>
</dbReference>
<dbReference type="Bgee" id="ENSG00000145703">
    <property type="expression patterns" value="Expressed in jejunal mucosa and 167 other cell types or tissues"/>
</dbReference>
<dbReference type="ExpressionAtlas" id="Q13576">
    <property type="expression patterns" value="baseline and differential"/>
</dbReference>
<dbReference type="GO" id="GO:0015629">
    <property type="term" value="C:actin cytoskeleton"/>
    <property type="evidence" value="ECO:0000304"/>
    <property type="project" value="ProtInc"/>
</dbReference>
<dbReference type="GO" id="GO:0005938">
    <property type="term" value="C:cell cortex"/>
    <property type="evidence" value="ECO:0000318"/>
    <property type="project" value="GO_Central"/>
</dbReference>
<dbReference type="GO" id="GO:0009986">
    <property type="term" value="C:cell surface"/>
    <property type="evidence" value="ECO:0000314"/>
    <property type="project" value="UniProtKB"/>
</dbReference>
<dbReference type="GO" id="GO:0005737">
    <property type="term" value="C:cytoplasm"/>
    <property type="evidence" value="ECO:0000314"/>
    <property type="project" value="UniProtKB"/>
</dbReference>
<dbReference type="GO" id="GO:0005829">
    <property type="term" value="C:cytosol"/>
    <property type="evidence" value="ECO:0000304"/>
    <property type="project" value="Reactome"/>
</dbReference>
<dbReference type="GO" id="GO:0070062">
    <property type="term" value="C:extracellular exosome"/>
    <property type="evidence" value="ECO:0007005"/>
    <property type="project" value="UniProtKB"/>
</dbReference>
<dbReference type="GO" id="GO:0030175">
    <property type="term" value="C:filopodium"/>
    <property type="evidence" value="ECO:0000314"/>
    <property type="project" value="UniProtKB"/>
</dbReference>
<dbReference type="GO" id="GO:0030027">
    <property type="term" value="C:lamellipodium"/>
    <property type="evidence" value="ECO:0000314"/>
    <property type="project" value="UniProtKB"/>
</dbReference>
<dbReference type="GO" id="GO:0005874">
    <property type="term" value="C:microtubule"/>
    <property type="evidence" value="ECO:0000314"/>
    <property type="project" value="UniProtKB"/>
</dbReference>
<dbReference type="GO" id="GO:0005902">
    <property type="term" value="C:microvillus"/>
    <property type="evidence" value="ECO:0007669"/>
    <property type="project" value="Ensembl"/>
</dbReference>
<dbReference type="GO" id="GO:0005886">
    <property type="term" value="C:plasma membrane"/>
    <property type="evidence" value="ECO:0000304"/>
    <property type="project" value="Reactome"/>
</dbReference>
<dbReference type="GO" id="GO:0030667">
    <property type="term" value="C:secretory granule membrane"/>
    <property type="evidence" value="ECO:0000304"/>
    <property type="project" value="Reactome"/>
</dbReference>
<dbReference type="GO" id="GO:0003779">
    <property type="term" value="F:actin binding"/>
    <property type="evidence" value="ECO:0000304"/>
    <property type="project" value="ProtInc"/>
</dbReference>
<dbReference type="GO" id="GO:0051015">
    <property type="term" value="F:actin filament binding"/>
    <property type="evidence" value="ECO:0000314"/>
    <property type="project" value="UniProtKB"/>
</dbReference>
<dbReference type="GO" id="GO:0071933">
    <property type="term" value="F:Arp2/3 complex binding"/>
    <property type="evidence" value="ECO:0000314"/>
    <property type="project" value="UniProtKB"/>
</dbReference>
<dbReference type="GO" id="GO:0005516">
    <property type="term" value="F:calmodulin binding"/>
    <property type="evidence" value="ECO:0000353"/>
    <property type="project" value="UniProtKB"/>
</dbReference>
<dbReference type="GO" id="GO:0005096">
    <property type="term" value="F:GTPase activator activity"/>
    <property type="evidence" value="ECO:0000318"/>
    <property type="project" value="GO_Central"/>
</dbReference>
<dbReference type="GO" id="GO:0005095">
    <property type="term" value="F:GTPase inhibitor activity"/>
    <property type="evidence" value="ECO:0000304"/>
    <property type="project" value="ProtInc"/>
</dbReference>
<dbReference type="GO" id="GO:0005547">
    <property type="term" value="F:phosphatidylinositol-3,4,5-trisphosphate binding"/>
    <property type="evidence" value="ECO:0000314"/>
    <property type="project" value="UniProtKB"/>
</dbReference>
<dbReference type="GO" id="GO:0031267">
    <property type="term" value="F:small GTPase binding"/>
    <property type="evidence" value="ECO:0000314"/>
    <property type="project" value="UniProtKB"/>
</dbReference>
<dbReference type="GO" id="GO:0034314">
    <property type="term" value="P:Arp2/3 complex-mediated actin nucleation"/>
    <property type="evidence" value="ECO:0000314"/>
    <property type="project" value="UniProtKB"/>
</dbReference>
<dbReference type="GO" id="GO:1903479">
    <property type="term" value="P:mitotic actomyosin contractile ring assembly actin filament organization"/>
    <property type="evidence" value="ECO:0000318"/>
    <property type="project" value="GO_Central"/>
</dbReference>
<dbReference type="GO" id="GO:0032956">
    <property type="term" value="P:regulation of actin cytoskeleton organization"/>
    <property type="evidence" value="ECO:0000314"/>
    <property type="project" value="UniProtKB"/>
</dbReference>
<dbReference type="GO" id="GO:0007165">
    <property type="term" value="P:signal transduction"/>
    <property type="evidence" value="ECO:0000304"/>
    <property type="project" value="ProtInc"/>
</dbReference>
<dbReference type="GO" id="GO:0070493">
    <property type="term" value="P:thrombin-activated receptor signaling pathway"/>
    <property type="evidence" value="ECO:0000314"/>
    <property type="project" value="UniProtKB"/>
</dbReference>
<dbReference type="CDD" id="cd21275">
    <property type="entry name" value="CH_IQGAP2"/>
    <property type="match status" value="1"/>
</dbReference>
<dbReference type="FunFam" id="1.10.418.10:FF:000013">
    <property type="entry name" value="IQ motif containing GTPase activating protein 1"/>
    <property type="match status" value="1"/>
</dbReference>
<dbReference type="FunFam" id="1.10.506.10:FF:000004">
    <property type="entry name" value="IQ motif containing GTPase activating protein 1"/>
    <property type="match status" value="1"/>
</dbReference>
<dbReference type="FunFam" id="1.20.5.190:FF:000005">
    <property type="entry name" value="IQ motif containing GTPase activating protein 1"/>
    <property type="match status" value="1"/>
</dbReference>
<dbReference type="Gene3D" id="1.20.5.190">
    <property type="match status" value="1"/>
</dbReference>
<dbReference type="Gene3D" id="1.10.418.10">
    <property type="entry name" value="Calponin-like domain"/>
    <property type="match status" value="1"/>
</dbReference>
<dbReference type="Gene3D" id="1.10.506.10">
    <property type="entry name" value="GTPase Activation - p120gap, domain 1"/>
    <property type="match status" value="1"/>
</dbReference>
<dbReference type="InterPro" id="IPR001715">
    <property type="entry name" value="CH_dom"/>
</dbReference>
<dbReference type="InterPro" id="IPR036872">
    <property type="entry name" value="CH_dom_sf"/>
</dbReference>
<dbReference type="InterPro" id="IPR000048">
    <property type="entry name" value="IQ_motif_EF-hand-BS"/>
</dbReference>
<dbReference type="InterPro" id="IPR000593">
    <property type="entry name" value="RasGAP_C"/>
</dbReference>
<dbReference type="InterPro" id="IPR023152">
    <property type="entry name" value="RasGAP_CS"/>
</dbReference>
<dbReference type="InterPro" id="IPR001936">
    <property type="entry name" value="RasGAP_dom"/>
</dbReference>
<dbReference type="InterPro" id="IPR008936">
    <property type="entry name" value="Rho_GTPase_activation_prot"/>
</dbReference>
<dbReference type="InterPro" id="IPR001202">
    <property type="entry name" value="WW_dom"/>
</dbReference>
<dbReference type="PANTHER" id="PTHR14149">
    <property type="entry name" value="RAS GTPASE-ACTIVATING PROTEIN WITH IQ MOTIF"/>
    <property type="match status" value="1"/>
</dbReference>
<dbReference type="PANTHER" id="PTHR14149:SF12">
    <property type="entry name" value="RAS GTPASE-ACTIVATING-LIKE PROTEIN IQGAP2"/>
    <property type="match status" value="1"/>
</dbReference>
<dbReference type="Pfam" id="PF00307">
    <property type="entry name" value="CH"/>
    <property type="match status" value="1"/>
</dbReference>
<dbReference type="Pfam" id="PF00612">
    <property type="entry name" value="IQ"/>
    <property type="match status" value="2"/>
</dbReference>
<dbReference type="Pfam" id="PF00616">
    <property type="entry name" value="RasGAP"/>
    <property type="match status" value="1"/>
</dbReference>
<dbReference type="Pfam" id="PF03836">
    <property type="entry name" value="RasGAP_C"/>
    <property type="match status" value="1"/>
</dbReference>
<dbReference type="SMART" id="SM00033">
    <property type="entry name" value="CH"/>
    <property type="match status" value="1"/>
</dbReference>
<dbReference type="SMART" id="SM00015">
    <property type="entry name" value="IQ"/>
    <property type="match status" value="3"/>
</dbReference>
<dbReference type="SMART" id="SM00323">
    <property type="entry name" value="RasGAP"/>
    <property type="match status" value="1"/>
</dbReference>
<dbReference type="SUPFAM" id="SSF47576">
    <property type="entry name" value="Calponin-homology domain, CH-domain"/>
    <property type="match status" value="1"/>
</dbReference>
<dbReference type="SUPFAM" id="SSF48350">
    <property type="entry name" value="GTPase activation domain, GAP"/>
    <property type="match status" value="1"/>
</dbReference>
<dbReference type="SUPFAM" id="SSF143885">
    <property type="entry name" value="RGC domain-like"/>
    <property type="match status" value="1"/>
</dbReference>
<dbReference type="PROSITE" id="PS50021">
    <property type="entry name" value="CH"/>
    <property type="match status" value="1"/>
</dbReference>
<dbReference type="PROSITE" id="PS50096">
    <property type="entry name" value="IQ"/>
    <property type="match status" value="3"/>
</dbReference>
<dbReference type="PROSITE" id="PS00509">
    <property type="entry name" value="RAS_GTPASE_ACTIV_1"/>
    <property type="match status" value="1"/>
</dbReference>
<dbReference type="PROSITE" id="PS50018">
    <property type="entry name" value="RAS_GTPASE_ACTIV_2"/>
    <property type="match status" value="1"/>
</dbReference>
<dbReference type="PROSITE" id="PS01159">
    <property type="entry name" value="WW_DOMAIN_1"/>
    <property type="match status" value="1"/>
</dbReference>
<dbReference type="PROSITE" id="PS50020">
    <property type="entry name" value="WW_DOMAIN_2"/>
    <property type="match status" value="1"/>
</dbReference>